<sequence>MSHKSDLIATNIQKYLQQHQQKELLRFITCGSVDDGKSTLIGRLLHDSKLIFEDQLASIVADSKKVGTQGDRLDLALLVDGLQSEREQGITIDVAYRYFSTDKRKFIIADTPGHEQYTRNMATGASNCDLAIILIDARKGLQTQTRRHNFICSLLGIKHVIVAVNKMDTVGYSQQIYKSIQDEYLKLAGSLQIPDIRFVPISALDGDNVVSKSPKMPWFRGSPLMHYLETIKIDYAYTDEFRFPVQLVCRPNSEFRGFQGTVVSGSAKIGDTIRVMPSGKITTIKSILSFDGKLNEAEAGQSITITTYDEIDISRGDMIVHKDAISHVSSMLRANIVWMSEQPLIEYKDYYIKFLTKQVIGSVNKFNYKTDINTLKEVACGTLELNEIATIELKLSEPVCFDSYQKNRTIGAFIIIDRLTNVTAGAGMVIKPLAANDKKDSTNDYSEFELELNALIRKHFPHWDAKNLRE</sequence>
<protein>
    <recommendedName>
        <fullName evidence="2">Sulfate adenylyltransferase subunit 1</fullName>
        <ecNumber evidence="2">2.7.7.4</ecNumber>
    </recommendedName>
    <alternativeName>
        <fullName evidence="2">ATP-sulfurylase large subunit</fullName>
    </alternativeName>
    <alternativeName>
        <fullName evidence="2">Sulfate adenylate transferase</fullName>
        <shortName evidence="2">SAT</shortName>
    </alternativeName>
</protein>
<gene>
    <name evidence="2" type="primary">cysN</name>
    <name type="ordered locus">FTT_1050c</name>
</gene>
<feature type="chain" id="PRO_1000092144" description="Sulfate adenylyltransferase subunit 1">
    <location>
        <begin position="1"/>
        <end position="470"/>
    </location>
</feature>
<feature type="domain" description="tr-type G">
    <location>
        <begin position="22"/>
        <end position="238"/>
    </location>
</feature>
<feature type="region of interest" description="G1" evidence="1">
    <location>
        <begin position="31"/>
        <end position="38"/>
    </location>
</feature>
<feature type="region of interest" description="G2" evidence="1">
    <location>
        <begin position="89"/>
        <end position="93"/>
    </location>
</feature>
<feature type="region of interest" description="G3" evidence="1">
    <location>
        <begin position="110"/>
        <end position="113"/>
    </location>
</feature>
<feature type="region of interest" description="G4" evidence="1">
    <location>
        <begin position="165"/>
        <end position="168"/>
    </location>
</feature>
<feature type="region of interest" description="G5" evidence="1">
    <location>
        <begin position="202"/>
        <end position="204"/>
    </location>
</feature>
<feature type="binding site" evidence="2">
    <location>
        <begin position="31"/>
        <end position="38"/>
    </location>
    <ligand>
        <name>GTP</name>
        <dbReference type="ChEBI" id="CHEBI:37565"/>
    </ligand>
</feature>
<feature type="binding site" evidence="2">
    <location>
        <begin position="110"/>
        <end position="114"/>
    </location>
    <ligand>
        <name>GTP</name>
        <dbReference type="ChEBI" id="CHEBI:37565"/>
    </ligand>
</feature>
<feature type="binding site" evidence="2">
    <location>
        <begin position="165"/>
        <end position="168"/>
    </location>
    <ligand>
        <name>GTP</name>
        <dbReference type="ChEBI" id="CHEBI:37565"/>
    </ligand>
</feature>
<organism>
    <name type="scientific">Francisella tularensis subsp. tularensis (strain SCHU S4 / Schu 4)</name>
    <dbReference type="NCBI Taxonomy" id="177416"/>
    <lineage>
        <taxon>Bacteria</taxon>
        <taxon>Pseudomonadati</taxon>
        <taxon>Pseudomonadota</taxon>
        <taxon>Gammaproteobacteria</taxon>
        <taxon>Thiotrichales</taxon>
        <taxon>Francisellaceae</taxon>
        <taxon>Francisella</taxon>
    </lineage>
</organism>
<keyword id="KW-0067">ATP-binding</keyword>
<keyword id="KW-0342">GTP-binding</keyword>
<keyword id="KW-0547">Nucleotide-binding</keyword>
<keyword id="KW-0548">Nucleotidyltransferase</keyword>
<keyword id="KW-1185">Reference proteome</keyword>
<keyword id="KW-0808">Transferase</keyword>
<dbReference type="EC" id="2.7.7.4" evidence="2"/>
<dbReference type="EMBL" id="AJ749949">
    <property type="protein sequence ID" value="CAG45683.1"/>
    <property type="molecule type" value="Genomic_DNA"/>
</dbReference>
<dbReference type="RefSeq" id="WP_003021169.1">
    <property type="nucleotide sequence ID" value="NC_006570.2"/>
</dbReference>
<dbReference type="RefSeq" id="YP_170032.1">
    <property type="nucleotide sequence ID" value="NC_006570.2"/>
</dbReference>
<dbReference type="SMR" id="Q5NG10"/>
<dbReference type="IntAct" id="Q5NG10">
    <property type="interactions" value="1"/>
</dbReference>
<dbReference type="STRING" id="177416.FTT_1050c"/>
<dbReference type="DNASU" id="3191498"/>
<dbReference type="EnsemblBacteria" id="CAG45683">
    <property type="protein sequence ID" value="CAG45683"/>
    <property type="gene ID" value="FTT_1050c"/>
</dbReference>
<dbReference type="KEGG" id="ftu:FTT_1050c"/>
<dbReference type="eggNOG" id="COG2895">
    <property type="taxonomic scope" value="Bacteria"/>
</dbReference>
<dbReference type="OrthoDB" id="9804504at2"/>
<dbReference type="UniPathway" id="UPA00140">
    <property type="reaction ID" value="UER00204"/>
</dbReference>
<dbReference type="Proteomes" id="UP000001174">
    <property type="component" value="Chromosome"/>
</dbReference>
<dbReference type="GO" id="GO:0005524">
    <property type="term" value="F:ATP binding"/>
    <property type="evidence" value="ECO:0007669"/>
    <property type="project" value="UniProtKB-KW"/>
</dbReference>
<dbReference type="GO" id="GO:0005525">
    <property type="term" value="F:GTP binding"/>
    <property type="evidence" value="ECO:0007669"/>
    <property type="project" value="UniProtKB-UniRule"/>
</dbReference>
<dbReference type="GO" id="GO:0003924">
    <property type="term" value="F:GTPase activity"/>
    <property type="evidence" value="ECO:0007669"/>
    <property type="project" value="InterPro"/>
</dbReference>
<dbReference type="GO" id="GO:0097216">
    <property type="term" value="F:guanosine tetraphosphate binding"/>
    <property type="evidence" value="ECO:0007669"/>
    <property type="project" value="UniProtKB-ARBA"/>
</dbReference>
<dbReference type="GO" id="GO:0004781">
    <property type="term" value="F:sulfate adenylyltransferase (ATP) activity"/>
    <property type="evidence" value="ECO:0007669"/>
    <property type="project" value="UniProtKB-UniRule"/>
</dbReference>
<dbReference type="GO" id="GO:0070814">
    <property type="term" value="P:hydrogen sulfide biosynthetic process"/>
    <property type="evidence" value="ECO:0007669"/>
    <property type="project" value="UniProtKB-UniRule"/>
</dbReference>
<dbReference type="GO" id="GO:0000103">
    <property type="term" value="P:sulfate assimilation"/>
    <property type="evidence" value="ECO:0007669"/>
    <property type="project" value="UniProtKB-UniRule"/>
</dbReference>
<dbReference type="CDD" id="cd04166">
    <property type="entry name" value="CysN_ATPS"/>
    <property type="match status" value="1"/>
</dbReference>
<dbReference type="CDD" id="cd03695">
    <property type="entry name" value="CysN_NodQ_II"/>
    <property type="match status" value="1"/>
</dbReference>
<dbReference type="CDD" id="cd04095">
    <property type="entry name" value="CysN_NoDQ_III"/>
    <property type="match status" value="1"/>
</dbReference>
<dbReference type="FunFam" id="3.40.50.300:FF:000119">
    <property type="entry name" value="Sulfate adenylyltransferase subunit 1"/>
    <property type="match status" value="1"/>
</dbReference>
<dbReference type="Gene3D" id="3.40.50.300">
    <property type="entry name" value="P-loop containing nucleotide triphosphate hydrolases"/>
    <property type="match status" value="1"/>
</dbReference>
<dbReference type="Gene3D" id="2.40.30.10">
    <property type="entry name" value="Translation factors"/>
    <property type="match status" value="2"/>
</dbReference>
<dbReference type="HAMAP" id="MF_00062">
    <property type="entry name" value="Sulf_adenylyltr_sub1"/>
    <property type="match status" value="1"/>
</dbReference>
<dbReference type="InterPro" id="IPR041757">
    <property type="entry name" value="CysN_GTP-bd"/>
</dbReference>
<dbReference type="InterPro" id="IPR044138">
    <property type="entry name" value="CysN_II"/>
</dbReference>
<dbReference type="InterPro" id="IPR044139">
    <property type="entry name" value="CysN_NoDQ_III"/>
</dbReference>
<dbReference type="InterPro" id="IPR004161">
    <property type="entry name" value="EFTu-like_2"/>
</dbReference>
<dbReference type="InterPro" id="IPR031157">
    <property type="entry name" value="G_TR_CS"/>
</dbReference>
<dbReference type="InterPro" id="IPR054696">
    <property type="entry name" value="GTP-eEF1A_C"/>
</dbReference>
<dbReference type="InterPro" id="IPR027417">
    <property type="entry name" value="P-loop_NTPase"/>
</dbReference>
<dbReference type="InterPro" id="IPR005225">
    <property type="entry name" value="Small_GTP-bd"/>
</dbReference>
<dbReference type="InterPro" id="IPR011779">
    <property type="entry name" value="SO4_adenylTrfase_lsu"/>
</dbReference>
<dbReference type="InterPro" id="IPR000795">
    <property type="entry name" value="T_Tr_GTP-bd_dom"/>
</dbReference>
<dbReference type="InterPro" id="IPR050100">
    <property type="entry name" value="TRAFAC_GTPase_members"/>
</dbReference>
<dbReference type="InterPro" id="IPR009000">
    <property type="entry name" value="Transl_B-barrel_sf"/>
</dbReference>
<dbReference type="InterPro" id="IPR009001">
    <property type="entry name" value="Transl_elong_EF1A/Init_IF2_C"/>
</dbReference>
<dbReference type="NCBIfam" id="TIGR02034">
    <property type="entry name" value="CysN"/>
    <property type="match status" value="1"/>
</dbReference>
<dbReference type="NCBIfam" id="NF003478">
    <property type="entry name" value="PRK05124.1"/>
    <property type="match status" value="1"/>
</dbReference>
<dbReference type="NCBIfam" id="TIGR00231">
    <property type="entry name" value="small_GTP"/>
    <property type="match status" value="1"/>
</dbReference>
<dbReference type="PANTHER" id="PTHR23115">
    <property type="entry name" value="TRANSLATION FACTOR"/>
    <property type="match status" value="1"/>
</dbReference>
<dbReference type="Pfam" id="PF22594">
    <property type="entry name" value="GTP-eEF1A_C"/>
    <property type="match status" value="1"/>
</dbReference>
<dbReference type="Pfam" id="PF00009">
    <property type="entry name" value="GTP_EFTU"/>
    <property type="match status" value="1"/>
</dbReference>
<dbReference type="Pfam" id="PF03144">
    <property type="entry name" value="GTP_EFTU_D2"/>
    <property type="match status" value="1"/>
</dbReference>
<dbReference type="PRINTS" id="PR00315">
    <property type="entry name" value="ELONGATNFCT"/>
</dbReference>
<dbReference type="SUPFAM" id="SSF50465">
    <property type="entry name" value="EF-Tu/eEF-1alpha/eIF2-gamma C-terminal domain"/>
    <property type="match status" value="1"/>
</dbReference>
<dbReference type="SUPFAM" id="SSF52540">
    <property type="entry name" value="P-loop containing nucleoside triphosphate hydrolases"/>
    <property type="match status" value="1"/>
</dbReference>
<dbReference type="SUPFAM" id="SSF50447">
    <property type="entry name" value="Translation proteins"/>
    <property type="match status" value="1"/>
</dbReference>
<dbReference type="PROSITE" id="PS00301">
    <property type="entry name" value="G_TR_1"/>
    <property type="match status" value="1"/>
</dbReference>
<dbReference type="PROSITE" id="PS51722">
    <property type="entry name" value="G_TR_2"/>
    <property type="match status" value="1"/>
</dbReference>
<reference key="1">
    <citation type="journal article" date="2005" name="Nat. Genet.">
        <title>The complete genome sequence of Francisella tularensis, the causative agent of tularemia.</title>
        <authorList>
            <person name="Larsson P."/>
            <person name="Oyston P.C.F."/>
            <person name="Chain P."/>
            <person name="Chu M.C."/>
            <person name="Duffield M."/>
            <person name="Fuxelius H.-H."/>
            <person name="Garcia E."/>
            <person name="Haelltorp G."/>
            <person name="Johansson D."/>
            <person name="Isherwood K.E."/>
            <person name="Karp P.D."/>
            <person name="Larsson E."/>
            <person name="Liu Y."/>
            <person name="Michell S."/>
            <person name="Prior J."/>
            <person name="Prior R."/>
            <person name="Malfatti S."/>
            <person name="Sjoestedt A."/>
            <person name="Svensson K."/>
            <person name="Thompson N."/>
            <person name="Vergez L."/>
            <person name="Wagg J.K."/>
            <person name="Wren B.W."/>
            <person name="Lindler L.E."/>
            <person name="Andersson S.G.E."/>
            <person name="Forsman M."/>
            <person name="Titball R.W."/>
        </authorList>
    </citation>
    <scope>NUCLEOTIDE SEQUENCE [LARGE SCALE GENOMIC DNA]</scope>
    <source>
        <strain>SCHU S4 / Schu 4</strain>
    </source>
</reference>
<accession>Q5NG10</accession>
<comment type="function">
    <text evidence="2">With CysD forms the ATP sulfurylase (ATPS) that catalyzes the adenylation of sulfate producing adenosine 5'-phosphosulfate (APS) and diphosphate, the first enzymatic step in sulfur assimilation pathway. APS synthesis involves the formation of a high-energy phosphoric-sulfuric acid anhydride bond driven by GTP hydrolysis by CysN coupled to ATP hydrolysis by CysD.</text>
</comment>
<comment type="catalytic activity">
    <reaction evidence="2">
        <text>sulfate + ATP + H(+) = adenosine 5'-phosphosulfate + diphosphate</text>
        <dbReference type="Rhea" id="RHEA:18133"/>
        <dbReference type="ChEBI" id="CHEBI:15378"/>
        <dbReference type="ChEBI" id="CHEBI:16189"/>
        <dbReference type="ChEBI" id="CHEBI:30616"/>
        <dbReference type="ChEBI" id="CHEBI:33019"/>
        <dbReference type="ChEBI" id="CHEBI:58243"/>
        <dbReference type="EC" id="2.7.7.4"/>
    </reaction>
</comment>
<comment type="pathway">
    <text evidence="2">Sulfur metabolism; hydrogen sulfide biosynthesis; sulfite from sulfate: step 1/3.</text>
</comment>
<comment type="subunit">
    <text evidence="2">Heterodimer composed of CysD, the smaller subunit, and CysN.</text>
</comment>
<comment type="similarity">
    <text evidence="2">Belongs to the TRAFAC class translation factor GTPase superfamily. Classic translation factor GTPase family. CysN/NodQ subfamily.</text>
</comment>
<evidence type="ECO:0000250" key="1"/>
<evidence type="ECO:0000255" key="2">
    <source>
        <dbReference type="HAMAP-Rule" id="MF_00062"/>
    </source>
</evidence>
<proteinExistence type="inferred from homology"/>
<name>CYSN_FRATT</name>